<feature type="chain" id="PRO_1000184773" description="ATP synthase subunit delta">
    <location>
        <begin position="1"/>
        <end position="178"/>
    </location>
</feature>
<sequence length="178" mass="19201">MAELTTLARPYAKAAFEHAQAHQQLASWSAMLGLAAAVSQDDTMQRVLKAPRLTSAEKASTFIEVCGDKFDAQAQNFIHVAAENDRLLLLPEISALFDLYKAEQEKSVDVDVTSAFALNQEQQDKLAKVLSARLGREVRLHAAEDASLIGGVVIRAGDLVIDGSIRGKLANLAEALKS</sequence>
<organism>
    <name type="scientific">Pseudomonas fluorescens (strain ATCC BAA-477 / NRRL B-23932 / Pf-5)</name>
    <dbReference type="NCBI Taxonomy" id="220664"/>
    <lineage>
        <taxon>Bacteria</taxon>
        <taxon>Pseudomonadati</taxon>
        <taxon>Pseudomonadota</taxon>
        <taxon>Gammaproteobacteria</taxon>
        <taxon>Pseudomonadales</taxon>
        <taxon>Pseudomonadaceae</taxon>
        <taxon>Pseudomonas</taxon>
    </lineage>
</organism>
<evidence type="ECO:0000255" key="1">
    <source>
        <dbReference type="HAMAP-Rule" id="MF_01416"/>
    </source>
</evidence>
<reference key="1">
    <citation type="journal article" date="2005" name="Nat. Biotechnol.">
        <title>Complete genome sequence of the plant commensal Pseudomonas fluorescens Pf-5.</title>
        <authorList>
            <person name="Paulsen I.T."/>
            <person name="Press C.M."/>
            <person name="Ravel J."/>
            <person name="Kobayashi D.Y."/>
            <person name="Myers G.S.A."/>
            <person name="Mavrodi D.V."/>
            <person name="DeBoy R.T."/>
            <person name="Seshadri R."/>
            <person name="Ren Q."/>
            <person name="Madupu R."/>
            <person name="Dodson R.J."/>
            <person name="Durkin A.S."/>
            <person name="Brinkac L.M."/>
            <person name="Daugherty S.C."/>
            <person name="Sullivan S.A."/>
            <person name="Rosovitz M.J."/>
            <person name="Gwinn M.L."/>
            <person name="Zhou L."/>
            <person name="Schneider D.J."/>
            <person name="Cartinhour S.W."/>
            <person name="Nelson W.C."/>
            <person name="Weidman J."/>
            <person name="Watkins K."/>
            <person name="Tran K."/>
            <person name="Khouri H."/>
            <person name="Pierson E.A."/>
            <person name="Pierson L.S. III"/>
            <person name="Thomashow L.S."/>
            <person name="Loper J.E."/>
        </authorList>
    </citation>
    <scope>NUCLEOTIDE SEQUENCE [LARGE SCALE GENOMIC DNA]</scope>
    <source>
        <strain>ATCC BAA-477 / NRRL B-23932 / Pf-5</strain>
    </source>
</reference>
<accession>Q4K3A6</accession>
<gene>
    <name evidence="1" type="primary">atpH</name>
    <name type="ordered locus">PFL_6219</name>
</gene>
<name>ATPD_PSEF5</name>
<proteinExistence type="inferred from homology"/>
<comment type="function">
    <text evidence="1">F(1)F(0) ATP synthase produces ATP from ADP in the presence of a proton or sodium gradient. F-type ATPases consist of two structural domains, F(1) containing the extramembraneous catalytic core and F(0) containing the membrane proton channel, linked together by a central stalk and a peripheral stalk. During catalysis, ATP synthesis in the catalytic domain of F(1) is coupled via a rotary mechanism of the central stalk subunits to proton translocation.</text>
</comment>
<comment type="function">
    <text evidence="1">This protein is part of the stalk that links CF(0) to CF(1). It either transmits conformational changes from CF(0) to CF(1) or is implicated in proton conduction.</text>
</comment>
<comment type="subunit">
    <text evidence="1">F-type ATPases have 2 components, F(1) - the catalytic core - and F(0) - the membrane proton channel. F(1) has five subunits: alpha(3), beta(3), gamma(1), delta(1), epsilon(1). F(0) has three main subunits: a(1), b(2) and c(10-14). The alpha and beta chains form an alternating ring which encloses part of the gamma chain. F(1) is attached to F(0) by a central stalk formed by the gamma and epsilon chains, while a peripheral stalk is formed by the delta and b chains.</text>
</comment>
<comment type="subcellular location">
    <subcellularLocation>
        <location evidence="1">Cell inner membrane</location>
        <topology evidence="1">Peripheral membrane protein</topology>
    </subcellularLocation>
</comment>
<comment type="similarity">
    <text evidence="1">Belongs to the ATPase delta chain family.</text>
</comment>
<protein>
    <recommendedName>
        <fullName evidence="1">ATP synthase subunit delta</fullName>
    </recommendedName>
    <alternativeName>
        <fullName evidence="1">ATP synthase F(1) sector subunit delta</fullName>
    </alternativeName>
    <alternativeName>
        <fullName evidence="1">F-type ATPase subunit delta</fullName>
        <shortName evidence="1">F-ATPase subunit delta</shortName>
    </alternativeName>
</protein>
<dbReference type="EMBL" id="CP000076">
    <property type="protein sequence ID" value="AAY95407.1"/>
    <property type="molecule type" value="Genomic_DNA"/>
</dbReference>
<dbReference type="RefSeq" id="WP_011064384.1">
    <property type="nucleotide sequence ID" value="NC_004129.6"/>
</dbReference>
<dbReference type="SMR" id="Q4K3A6"/>
<dbReference type="STRING" id="220664.PFL_6219"/>
<dbReference type="KEGG" id="pfl:PFL_6219"/>
<dbReference type="PATRIC" id="fig|220664.5.peg.6349"/>
<dbReference type="eggNOG" id="COG0712">
    <property type="taxonomic scope" value="Bacteria"/>
</dbReference>
<dbReference type="HOGENOM" id="CLU_085114_3_0_6"/>
<dbReference type="Proteomes" id="UP000008540">
    <property type="component" value="Chromosome"/>
</dbReference>
<dbReference type="GO" id="GO:0005886">
    <property type="term" value="C:plasma membrane"/>
    <property type="evidence" value="ECO:0007669"/>
    <property type="project" value="UniProtKB-SubCell"/>
</dbReference>
<dbReference type="GO" id="GO:0045259">
    <property type="term" value="C:proton-transporting ATP synthase complex"/>
    <property type="evidence" value="ECO:0007669"/>
    <property type="project" value="UniProtKB-KW"/>
</dbReference>
<dbReference type="GO" id="GO:0046933">
    <property type="term" value="F:proton-transporting ATP synthase activity, rotational mechanism"/>
    <property type="evidence" value="ECO:0007669"/>
    <property type="project" value="UniProtKB-UniRule"/>
</dbReference>
<dbReference type="Gene3D" id="1.10.520.20">
    <property type="entry name" value="N-terminal domain of the delta subunit of the F1F0-ATP synthase"/>
    <property type="match status" value="1"/>
</dbReference>
<dbReference type="HAMAP" id="MF_01416">
    <property type="entry name" value="ATP_synth_delta_bact"/>
    <property type="match status" value="1"/>
</dbReference>
<dbReference type="InterPro" id="IPR026015">
    <property type="entry name" value="ATP_synth_OSCP/delta_N_sf"/>
</dbReference>
<dbReference type="InterPro" id="IPR000711">
    <property type="entry name" value="ATPase_OSCP/dsu"/>
</dbReference>
<dbReference type="NCBIfam" id="TIGR01145">
    <property type="entry name" value="ATP_synt_delta"/>
    <property type="match status" value="1"/>
</dbReference>
<dbReference type="NCBIfam" id="NF004402">
    <property type="entry name" value="PRK05758.2-2"/>
    <property type="match status" value="1"/>
</dbReference>
<dbReference type="PANTHER" id="PTHR11910">
    <property type="entry name" value="ATP SYNTHASE DELTA CHAIN"/>
    <property type="match status" value="1"/>
</dbReference>
<dbReference type="Pfam" id="PF00213">
    <property type="entry name" value="OSCP"/>
    <property type="match status" value="1"/>
</dbReference>
<dbReference type="PRINTS" id="PR00125">
    <property type="entry name" value="ATPASEDELTA"/>
</dbReference>
<dbReference type="SUPFAM" id="SSF47928">
    <property type="entry name" value="N-terminal domain of the delta subunit of the F1F0-ATP synthase"/>
    <property type="match status" value="1"/>
</dbReference>
<keyword id="KW-0066">ATP synthesis</keyword>
<keyword id="KW-0997">Cell inner membrane</keyword>
<keyword id="KW-1003">Cell membrane</keyword>
<keyword id="KW-0139">CF(1)</keyword>
<keyword id="KW-0375">Hydrogen ion transport</keyword>
<keyword id="KW-0406">Ion transport</keyword>
<keyword id="KW-0472">Membrane</keyword>
<keyword id="KW-0813">Transport</keyword>